<sequence length="87" mass="9642">MKIKNSYLVIASLLYPISFISTAASLTVEQRLAALENDLQETKQELQRYKEQEKKNKAITLVRVNSAADADNKSNAFNVAKTATPIA</sequence>
<accession>P26217</accession>
<protein>
    <recommendedName>
        <fullName>Putative outer membrane protein ArbH</fullName>
    </recommendedName>
</protein>
<proteinExistence type="inferred from homology"/>
<dbReference type="EMBL" id="M81772">
    <property type="status" value="NOT_ANNOTATED_CDS"/>
    <property type="molecule type" value="Genomic_DNA"/>
</dbReference>
<dbReference type="PIR" id="D42603">
    <property type="entry name" value="D42603"/>
</dbReference>
<dbReference type="SMR" id="P26217"/>
<dbReference type="GO" id="GO:0009279">
    <property type="term" value="C:cell outer membrane"/>
    <property type="evidence" value="ECO:0007669"/>
    <property type="project" value="UniProtKB-SubCell"/>
</dbReference>
<dbReference type="GO" id="GO:0046930">
    <property type="term" value="C:pore complex"/>
    <property type="evidence" value="ECO:0007669"/>
    <property type="project" value="UniProtKB-KW"/>
</dbReference>
<dbReference type="GO" id="GO:0015288">
    <property type="term" value="F:porin activity"/>
    <property type="evidence" value="ECO:0007669"/>
    <property type="project" value="UniProtKB-KW"/>
</dbReference>
<dbReference type="GO" id="GO:0006811">
    <property type="term" value="P:monoatomic ion transport"/>
    <property type="evidence" value="ECO:0007669"/>
    <property type="project" value="UniProtKB-KW"/>
</dbReference>
<dbReference type="InterPro" id="IPR021570">
    <property type="entry name" value="LamB-type_porin_N_dom"/>
</dbReference>
<dbReference type="Pfam" id="PF11471">
    <property type="entry name" value="Sugarporin_N"/>
    <property type="match status" value="1"/>
</dbReference>
<keyword id="KW-0998">Cell outer membrane</keyword>
<keyword id="KW-0406">Ion transport</keyword>
<keyword id="KW-0472">Membrane</keyword>
<keyword id="KW-0626">Porin</keyword>
<keyword id="KW-0732">Signal</keyword>
<keyword id="KW-0812">Transmembrane</keyword>
<keyword id="KW-1134">Transmembrane beta strand</keyword>
<keyword id="KW-0813">Transport</keyword>
<organism>
    <name type="scientific">Dickeya chrysanthemi</name>
    <name type="common">Pectobacterium chrysanthemi</name>
    <name type="synonym">Erwinia chrysanthemi</name>
    <dbReference type="NCBI Taxonomy" id="556"/>
    <lineage>
        <taxon>Bacteria</taxon>
        <taxon>Pseudomonadati</taxon>
        <taxon>Pseudomonadota</taxon>
        <taxon>Gammaproteobacteria</taxon>
        <taxon>Enterobacterales</taxon>
        <taxon>Pectobacteriaceae</taxon>
        <taxon>Dickeya</taxon>
    </lineage>
</organism>
<feature type="signal peptide" evidence="1">
    <location>
        <begin position="1"/>
        <end position="23"/>
    </location>
</feature>
<feature type="chain" id="PRO_0000025189" description="Putative outer membrane protein ArbH">
    <location>
        <begin position="24"/>
        <end position="87" status="greater than"/>
    </location>
</feature>
<feature type="non-terminal residue">
    <location>
        <position position="87"/>
    </location>
</feature>
<reference key="1">
    <citation type="journal article" date="1992" name="J. Bacteriol.">
        <title>Nucleotide sequences of the arb genes, which control beta-glucoside utilization in Erwinia chrysanthemi: comparison with the Escherichia coli bgl operon and evidence for a new beta-glycohydrolase family including enzymes from eubacteria, archeabacteria, and humans.</title>
        <authorList>
            <person name="el Hassouni M."/>
            <person name="Henrissat B."/>
            <person name="Chippaux M."/>
            <person name="Barras F."/>
        </authorList>
    </citation>
    <scope>NUCLEOTIDE SEQUENCE [GENOMIC DNA]</scope>
</reference>
<evidence type="ECO:0000255" key="1"/>
<evidence type="ECO:0000305" key="2"/>
<name>ARBH_DICCH</name>
<comment type="function">
    <text evidence="2">May be a sugar porin with a broad carbohydrate specificity.</text>
</comment>
<comment type="subcellular location">
    <subcellularLocation>
        <location evidence="2">Cell outer membrane</location>
        <topology evidence="2">Multi-pass membrane protein</topology>
    </subcellularLocation>
</comment>
<comment type="similarity">
    <text evidence="2">Belongs to the porin LamB (TC 1.B.3) family.</text>
</comment>
<gene>
    <name type="primary">arbH</name>
</gene>